<accession>Q85DF8</accession>
<keyword id="KW-0249">Electron transport</keyword>
<keyword id="KW-0349">Heme</keyword>
<keyword id="KW-0408">Iron</keyword>
<keyword id="KW-0472">Membrane</keyword>
<keyword id="KW-0479">Metal-binding</keyword>
<keyword id="KW-0496">Mitochondrion</keyword>
<keyword id="KW-0999">Mitochondrion inner membrane</keyword>
<keyword id="KW-0679">Respiratory chain</keyword>
<keyword id="KW-0812">Transmembrane</keyword>
<keyword id="KW-1133">Transmembrane helix</keyword>
<keyword id="KW-0813">Transport</keyword>
<keyword id="KW-0830">Ubiquinone</keyword>
<name>CYB_PARBE</name>
<comment type="function">
    <text evidence="2">Component of the ubiquinol-cytochrome c reductase complex (complex III or cytochrome b-c1 complex) that is part of the mitochondrial respiratory chain. The b-c1 complex mediates electron transfer from ubiquinol to cytochrome c. Contributes to the generation of a proton gradient across the mitochondrial membrane that is then used for ATP synthesis.</text>
</comment>
<comment type="cofactor">
    <cofactor evidence="2">
        <name>heme b</name>
        <dbReference type="ChEBI" id="CHEBI:60344"/>
    </cofactor>
    <text evidence="2">Binds 2 heme b groups non-covalently.</text>
</comment>
<comment type="subunit">
    <text evidence="2">The cytochrome bc1 complex contains 11 subunits: 3 respiratory subunits (MT-CYB, CYC1 and UQCRFS1), 2 core proteins (UQCRC1 and UQCRC2) and 6 low-molecular weight proteins (UQCRH/QCR6, UQCRB/QCR7, UQCRQ/QCR8, UQCR10/QCR9, UQCR11/QCR10 and a cleavage product of UQCRFS1). This cytochrome bc1 complex then forms a dimer.</text>
</comment>
<comment type="subcellular location">
    <subcellularLocation>
        <location evidence="2">Mitochondrion inner membrane</location>
        <topology evidence="2">Multi-pass membrane protein</topology>
    </subcellularLocation>
</comment>
<comment type="miscellaneous">
    <text evidence="1">Heme 1 (or BL or b562) is low-potential and absorbs at about 562 nm, and heme 2 (or BH or b566) is high-potential and absorbs at about 566 nm.</text>
</comment>
<comment type="similarity">
    <text evidence="3 4">Belongs to the cytochrome b family.</text>
</comment>
<comment type="caution">
    <text evidence="2">The full-length protein contains only eight transmembrane helices, not nine as predicted by bioinformatics tools.</text>
</comment>
<reference key="1">
    <citation type="journal article" date="2003" name="Mol. Phylogenet. Evol.">
        <title>Molecular phylogenetic relationships of moles, shrew moles, and desmans from the new and old worlds.</title>
        <authorList>
            <person name="Shinohara A."/>
            <person name="Campbell K.L."/>
            <person name="Suzuki H."/>
        </authorList>
    </citation>
    <scope>NUCLEOTIDE SEQUENCE [GENOMIC DNA]</scope>
    <source>
        <strain>Isolate HT-1</strain>
    </source>
</reference>
<geneLocation type="mitochondrion"/>
<dbReference type="EMBL" id="AB076808">
    <property type="protein sequence ID" value="BAC75893.1"/>
    <property type="molecule type" value="Genomic_DNA"/>
</dbReference>
<dbReference type="SMR" id="Q85DF8"/>
<dbReference type="GO" id="GO:0005743">
    <property type="term" value="C:mitochondrial inner membrane"/>
    <property type="evidence" value="ECO:0007669"/>
    <property type="project" value="UniProtKB-SubCell"/>
</dbReference>
<dbReference type="GO" id="GO:0045275">
    <property type="term" value="C:respiratory chain complex III"/>
    <property type="evidence" value="ECO:0007669"/>
    <property type="project" value="InterPro"/>
</dbReference>
<dbReference type="GO" id="GO:0046872">
    <property type="term" value="F:metal ion binding"/>
    <property type="evidence" value="ECO:0007669"/>
    <property type="project" value="UniProtKB-KW"/>
</dbReference>
<dbReference type="GO" id="GO:0008121">
    <property type="term" value="F:ubiquinol-cytochrome-c reductase activity"/>
    <property type="evidence" value="ECO:0007669"/>
    <property type="project" value="InterPro"/>
</dbReference>
<dbReference type="GO" id="GO:0006122">
    <property type="term" value="P:mitochondrial electron transport, ubiquinol to cytochrome c"/>
    <property type="evidence" value="ECO:0007669"/>
    <property type="project" value="TreeGrafter"/>
</dbReference>
<dbReference type="CDD" id="cd00290">
    <property type="entry name" value="cytochrome_b_C"/>
    <property type="match status" value="1"/>
</dbReference>
<dbReference type="CDD" id="cd00284">
    <property type="entry name" value="Cytochrome_b_N"/>
    <property type="match status" value="1"/>
</dbReference>
<dbReference type="FunFam" id="1.20.810.10:FF:000002">
    <property type="entry name" value="Cytochrome b"/>
    <property type="match status" value="1"/>
</dbReference>
<dbReference type="Gene3D" id="1.20.810.10">
    <property type="entry name" value="Cytochrome Bc1 Complex, Chain C"/>
    <property type="match status" value="1"/>
</dbReference>
<dbReference type="InterPro" id="IPR005798">
    <property type="entry name" value="Cyt_b/b6_C"/>
</dbReference>
<dbReference type="InterPro" id="IPR036150">
    <property type="entry name" value="Cyt_b/b6_C_sf"/>
</dbReference>
<dbReference type="InterPro" id="IPR005797">
    <property type="entry name" value="Cyt_b/b6_N"/>
</dbReference>
<dbReference type="InterPro" id="IPR027387">
    <property type="entry name" value="Cytb/b6-like_sf"/>
</dbReference>
<dbReference type="InterPro" id="IPR030689">
    <property type="entry name" value="Cytochrome_b"/>
</dbReference>
<dbReference type="InterPro" id="IPR048260">
    <property type="entry name" value="Cytochrome_b_C_euk/bac"/>
</dbReference>
<dbReference type="InterPro" id="IPR048259">
    <property type="entry name" value="Cytochrome_b_N_euk/bac"/>
</dbReference>
<dbReference type="InterPro" id="IPR016174">
    <property type="entry name" value="Di-haem_cyt_TM"/>
</dbReference>
<dbReference type="PANTHER" id="PTHR19271">
    <property type="entry name" value="CYTOCHROME B"/>
    <property type="match status" value="1"/>
</dbReference>
<dbReference type="PANTHER" id="PTHR19271:SF16">
    <property type="entry name" value="CYTOCHROME B"/>
    <property type="match status" value="1"/>
</dbReference>
<dbReference type="Pfam" id="PF00032">
    <property type="entry name" value="Cytochrom_B_C"/>
    <property type="match status" value="1"/>
</dbReference>
<dbReference type="Pfam" id="PF00033">
    <property type="entry name" value="Cytochrome_B"/>
    <property type="match status" value="1"/>
</dbReference>
<dbReference type="PIRSF" id="PIRSF038885">
    <property type="entry name" value="COB"/>
    <property type="match status" value="1"/>
</dbReference>
<dbReference type="SUPFAM" id="SSF81648">
    <property type="entry name" value="a domain/subunit of cytochrome bc1 complex (Ubiquinol-cytochrome c reductase)"/>
    <property type="match status" value="1"/>
</dbReference>
<dbReference type="SUPFAM" id="SSF81342">
    <property type="entry name" value="Transmembrane di-heme cytochromes"/>
    <property type="match status" value="1"/>
</dbReference>
<dbReference type="PROSITE" id="PS51003">
    <property type="entry name" value="CYTB_CTER"/>
    <property type="match status" value="1"/>
</dbReference>
<dbReference type="PROSITE" id="PS51002">
    <property type="entry name" value="CYTB_NTER"/>
    <property type="match status" value="1"/>
</dbReference>
<protein>
    <recommendedName>
        <fullName>Cytochrome b</fullName>
    </recommendedName>
    <alternativeName>
        <fullName>Complex III subunit 3</fullName>
    </alternativeName>
    <alternativeName>
        <fullName>Complex III subunit III</fullName>
    </alternativeName>
    <alternativeName>
        <fullName>Cytochrome b-c1 complex subunit 3</fullName>
    </alternativeName>
    <alternativeName>
        <fullName>Ubiquinol-cytochrome-c reductase complex cytochrome b subunit</fullName>
    </alternativeName>
</protein>
<evidence type="ECO:0000250" key="1"/>
<evidence type="ECO:0000250" key="2">
    <source>
        <dbReference type="UniProtKB" id="P00157"/>
    </source>
</evidence>
<evidence type="ECO:0000255" key="3">
    <source>
        <dbReference type="PROSITE-ProRule" id="PRU00967"/>
    </source>
</evidence>
<evidence type="ECO:0000255" key="4">
    <source>
        <dbReference type="PROSITE-ProRule" id="PRU00968"/>
    </source>
</evidence>
<gene>
    <name type="primary">MT-CYB</name>
    <name type="synonym">COB</name>
    <name type="synonym">CYTB</name>
    <name type="synonym">MTCYB</name>
</gene>
<sequence>MTNIRKTHPLMKIVNNSFIDLPAPSNISSWWNFGSLLGICLILQILTGLFLAMHYTSDTMTAFSSVTHICRDVNYGWLIRYLHANGASMFFICLFLHVGRGLYYGSYMFMETWNIGVLLLFTVMATAFMGYVLPWGQMSFWGATVITNLLSAIPYIGTDLVEWIWGGFSVDKATLTRFFAFHFILPFIVAALAGVHLLFLHETGSNNPSGLSSDSDKIPFHPYYTIKDILGVLILILALSLLVLFSPDLLGDPDNYIPANPLNTPPHIKPEWYFLFAYAILRSIPNKLGGVLALVLSILVLALVPFLHTSKQRSMMFRPISQCLFWLLVADLFTLTWIGGQPVEHPFIIIGQLASILYFMLILVLMPIASLVENNLLKW</sequence>
<organism>
    <name type="scientific">Parascalops breweri</name>
    <name type="common">Hairy-tailed mole</name>
    <name type="synonym">Scalops breweri</name>
    <dbReference type="NCBI Taxonomy" id="94437"/>
    <lineage>
        <taxon>Eukaryota</taxon>
        <taxon>Metazoa</taxon>
        <taxon>Chordata</taxon>
        <taxon>Craniata</taxon>
        <taxon>Vertebrata</taxon>
        <taxon>Euteleostomi</taxon>
        <taxon>Mammalia</taxon>
        <taxon>Eutheria</taxon>
        <taxon>Laurasiatheria</taxon>
        <taxon>Eulipotyphla</taxon>
        <taxon>Talpidae</taxon>
        <taxon>Parascalops</taxon>
    </lineage>
</organism>
<proteinExistence type="inferred from homology"/>
<feature type="chain" id="PRO_0000061347" description="Cytochrome b">
    <location>
        <begin position="1"/>
        <end position="379"/>
    </location>
</feature>
<feature type="transmembrane region" description="Helical" evidence="2">
    <location>
        <begin position="33"/>
        <end position="53"/>
    </location>
</feature>
<feature type="transmembrane region" description="Helical" evidence="2">
    <location>
        <begin position="77"/>
        <end position="98"/>
    </location>
</feature>
<feature type="transmembrane region" description="Helical" evidence="2">
    <location>
        <begin position="113"/>
        <end position="133"/>
    </location>
</feature>
<feature type="transmembrane region" description="Helical" evidence="2">
    <location>
        <begin position="178"/>
        <end position="198"/>
    </location>
</feature>
<feature type="transmembrane region" description="Helical" evidence="2">
    <location>
        <begin position="226"/>
        <end position="246"/>
    </location>
</feature>
<feature type="transmembrane region" description="Helical" evidence="2">
    <location>
        <begin position="288"/>
        <end position="308"/>
    </location>
</feature>
<feature type="transmembrane region" description="Helical" evidence="2">
    <location>
        <begin position="320"/>
        <end position="340"/>
    </location>
</feature>
<feature type="transmembrane region" description="Helical" evidence="2">
    <location>
        <begin position="347"/>
        <end position="367"/>
    </location>
</feature>
<feature type="binding site" description="axial binding residue" evidence="2">
    <location>
        <position position="83"/>
    </location>
    <ligand>
        <name>heme b</name>
        <dbReference type="ChEBI" id="CHEBI:60344"/>
        <label>b562</label>
    </ligand>
    <ligandPart>
        <name>Fe</name>
        <dbReference type="ChEBI" id="CHEBI:18248"/>
    </ligandPart>
</feature>
<feature type="binding site" description="axial binding residue" evidence="2">
    <location>
        <position position="97"/>
    </location>
    <ligand>
        <name>heme b</name>
        <dbReference type="ChEBI" id="CHEBI:60344"/>
        <label>b566</label>
    </ligand>
    <ligandPart>
        <name>Fe</name>
        <dbReference type="ChEBI" id="CHEBI:18248"/>
    </ligandPart>
</feature>
<feature type="binding site" description="axial binding residue" evidence="2">
    <location>
        <position position="182"/>
    </location>
    <ligand>
        <name>heme b</name>
        <dbReference type="ChEBI" id="CHEBI:60344"/>
        <label>b562</label>
    </ligand>
    <ligandPart>
        <name>Fe</name>
        <dbReference type="ChEBI" id="CHEBI:18248"/>
    </ligandPart>
</feature>
<feature type="binding site" description="axial binding residue" evidence="2">
    <location>
        <position position="196"/>
    </location>
    <ligand>
        <name>heme b</name>
        <dbReference type="ChEBI" id="CHEBI:60344"/>
        <label>b566</label>
    </ligand>
    <ligandPart>
        <name>Fe</name>
        <dbReference type="ChEBI" id="CHEBI:18248"/>
    </ligandPart>
</feature>
<feature type="binding site" evidence="2">
    <location>
        <position position="201"/>
    </location>
    <ligand>
        <name>a ubiquinone</name>
        <dbReference type="ChEBI" id="CHEBI:16389"/>
    </ligand>
</feature>